<keyword id="KW-0997">Cell inner membrane</keyword>
<keyword id="KW-1003">Cell membrane</keyword>
<keyword id="KW-0444">Lipid biosynthesis</keyword>
<keyword id="KW-0443">Lipid metabolism</keyword>
<keyword id="KW-0472">Membrane</keyword>
<keyword id="KW-0594">Phospholipid biosynthesis</keyword>
<keyword id="KW-1208">Phospholipid metabolism</keyword>
<keyword id="KW-0808">Transferase</keyword>
<keyword id="KW-0812">Transmembrane</keyword>
<keyword id="KW-1133">Transmembrane helix</keyword>
<protein>
    <recommendedName>
        <fullName evidence="1">Glycerol-3-phosphate acyltransferase</fullName>
    </recommendedName>
    <alternativeName>
        <fullName evidence="1">Acyl-PO4 G3P acyltransferase</fullName>
    </alternativeName>
    <alternativeName>
        <fullName evidence="1">Acyl-phosphate--glycerol-3-phosphate acyltransferase</fullName>
    </alternativeName>
    <alternativeName>
        <fullName evidence="1">G3P acyltransferase</fullName>
        <shortName evidence="1">GPAT</shortName>
        <ecNumber evidence="1">2.3.1.275</ecNumber>
    </alternativeName>
    <alternativeName>
        <fullName evidence="1">Lysophosphatidic acid synthase</fullName>
        <shortName evidence="1">LPA synthase</shortName>
    </alternativeName>
</protein>
<reference key="1">
    <citation type="journal article" date="2007" name="PLoS Genet.">
        <title>Meningococcal genetic variation mechanisms viewed through comparative analysis of serogroup C strain FAM18.</title>
        <authorList>
            <person name="Bentley S.D."/>
            <person name="Vernikos G.S."/>
            <person name="Snyder L.A.S."/>
            <person name="Churcher C."/>
            <person name="Arrowsmith C."/>
            <person name="Chillingworth T."/>
            <person name="Cronin A."/>
            <person name="Davis P.H."/>
            <person name="Holroyd N.E."/>
            <person name="Jagels K."/>
            <person name="Maddison M."/>
            <person name="Moule S."/>
            <person name="Rabbinowitsch E."/>
            <person name="Sharp S."/>
            <person name="Unwin L."/>
            <person name="Whitehead S."/>
            <person name="Quail M.A."/>
            <person name="Achtman M."/>
            <person name="Barrell B.G."/>
            <person name="Saunders N.J."/>
            <person name="Parkhill J."/>
        </authorList>
    </citation>
    <scope>NUCLEOTIDE SEQUENCE [LARGE SCALE GENOMIC DNA]</scope>
    <source>
        <strain>ATCC 700532 / DSM 15464 / FAM18</strain>
    </source>
</reference>
<feature type="chain" id="PRO_1000064197" description="Glycerol-3-phosphate acyltransferase">
    <location>
        <begin position="1"/>
        <end position="200"/>
    </location>
</feature>
<feature type="transmembrane region" description="Helical" evidence="1">
    <location>
        <begin position="2"/>
        <end position="22"/>
    </location>
</feature>
<feature type="transmembrane region" description="Helical" evidence="1">
    <location>
        <begin position="51"/>
        <end position="71"/>
    </location>
</feature>
<feature type="transmembrane region" description="Helical" evidence="1">
    <location>
        <begin position="84"/>
        <end position="104"/>
    </location>
</feature>
<feature type="transmembrane region" description="Helical" evidence="1">
    <location>
        <begin position="114"/>
        <end position="134"/>
    </location>
</feature>
<feature type="transmembrane region" description="Helical" evidence="1">
    <location>
        <begin position="159"/>
        <end position="179"/>
    </location>
</feature>
<name>PLSY_NEIMF</name>
<proteinExistence type="inferred from homology"/>
<accession>A1KTU8</accession>
<comment type="function">
    <text evidence="1">Catalyzes the transfer of an acyl group from acyl-phosphate (acyl-PO(4)) to glycerol-3-phosphate (G3P) to form lysophosphatidic acid (LPA). This enzyme utilizes acyl-phosphate as fatty acyl donor, but not acyl-CoA or acyl-ACP.</text>
</comment>
<comment type="catalytic activity">
    <reaction evidence="1">
        <text>an acyl phosphate + sn-glycerol 3-phosphate = a 1-acyl-sn-glycero-3-phosphate + phosphate</text>
        <dbReference type="Rhea" id="RHEA:34075"/>
        <dbReference type="ChEBI" id="CHEBI:43474"/>
        <dbReference type="ChEBI" id="CHEBI:57597"/>
        <dbReference type="ChEBI" id="CHEBI:57970"/>
        <dbReference type="ChEBI" id="CHEBI:59918"/>
        <dbReference type="EC" id="2.3.1.275"/>
    </reaction>
</comment>
<comment type="pathway">
    <text evidence="1">Lipid metabolism; phospholipid metabolism.</text>
</comment>
<comment type="subunit">
    <text evidence="1">Probably interacts with PlsX.</text>
</comment>
<comment type="subcellular location">
    <subcellularLocation>
        <location evidence="1">Cell inner membrane</location>
        <topology evidence="1">Multi-pass membrane protein</topology>
    </subcellularLocation>
</comment>
<comment type="similarity">
    <text evidence="1">Belongs to the PlsY family.</text>
</comment>
<organism>
    <name type="scientific">Neisseria meningitidis serogroup C / serotype 2a (strain ATCC 700532 / DSM 15464 / FAM18)</name>
    <dbReference type="NCBI Taxonomy" id="272831"/>
    <lineage>
        <taxon>Bacteria</taxon>
        <taxon>Pseudomonadati</taxon>
        <taxon>Pseudomonadota</taxon>
        <taxon>Betaproteobacteria</taxon>
        <taxon>Neisseriales</taxon>
        <taxon>Neisseriaceae</taxon>
        <taxon>Neisseria</taxon>
    </lineage>
</organism>
<dbReference type="EC" id="2.3.1.275" evidence="1"/>
<dbReference type="EMBL" id="AM421808">
    <property type="protein sequence ID" value="CAM10288.1"/>
    <property type="molecule type" value="Genomic_DNA"/>
</dbReference>
<dbReference type="RefSeq" id="WP_002221052.1">
    <property type="nucleotide sequence ID" value="NC_008767.1"/>
</dbReference>
<dbReference type="SMR" id="A1KTU8"/>
<dbReference type="KEGG" id="nmc:NMC1026"/>
<dbReference type="HOGENOM" id="CLU_081254_0_0_4"/>
<dbReference type="UniPathway" id="UPA00085"/>
<dbReference type="Proteomes" id="UP000002286">
    <property type="component" value="Chromosome"/>
</dbReference>
<dbReference type="GO" id="GO:0005886">
    <property type="term" value="C:plasma membrane"/>
    <property type="evidence" value="ECO:0007669"/>
    <property type="project" value="UniProtKB-SubCell"/>
</dbReference>
<dbReference type="GO" id="GO:0043772">
    <property type="term" value="F:acyl-phosphate glycerol-3-phosphate acyltransferase activity"/>
    <property type="evidence" value="ECO:0007669"/>
    <property type="project" value="UniProtKB-UniRule"/>
</dbReference>
<dbReference type="GO" id="GO:0008654">
    <property type="term" value="P:phospholipid biosynthetic process"/>
    <property type="evidence" value="ECO:0007669"/>
    <property type="project" value="UniProtKB-UniRule"/>
</dbReference>
<dbReference type="HAMAP" id="MF_01043">
    <property type="entry name" value="PlsY"/>
    <property type="match status" value="1"/>
</dbReference>
<dbReference type="InterPro" id="IPR003811">
    <property type="entry name" value="G3P_acylTferase_PlsY"/>
</dbReference>
<dbReference type="NCBIfam" id="TIGR00023">
    <property type="entry name" value="glycerol-3-phosphate 1-O-acyltransferase PlsY"/>
    <property type="match status" value="1"/>
</dbReference>
<dbReference type="PANTHER" id="PTHR30309:SF0">
    <property type="entry name" value="GLYCEROL-3-PHOSPHATE ACYLTRANSFERASE-RELATED"/>
    <property type="match status" value="1"/>
</dbReference>
<dbReference type="PANTHER" id="PTHR30309">
    <property type="entry name" value="INNER MEMBRANE PROTEIN YGIH"/>
    <property type="match status" value="1"/>
</dbReference>
<dbReference type="Pfam" id="PF02660">
    <property type="entry name" value="G3P_acyltransf"/>
    <property type="match status" value="1"/>
</dbReference>
<dbReference type="SMART" id="SM01207">
    <property type="entry name" value="G3P_acyltransf"/>
    <property type="match status" value="1"/>
</dbReference>
<gene>
    <name evidence="1" type="primary">plsY</name>
    <name type="ordered locus">NMC1026</name>
</gene>
<sequence>MFNIPAVAVSYLIGSLSFAVIVSKYYGMDDPRTYGSGNPGATNVLRSGKKKAAVLTLLGDAAKGLVAVLLARVLQEPLGLSDSAIAAVALAALVGHMWPVFFGFKGGKGVATALGVLLALSPATALVCALIWLVMAFGFKVSSLAALTATIAAPLAALFFMPHLSWIWATLLIALLVLFRHKSNISNLLKGKEGKIGEKR</sequence>
<evidence type="ECO:0000255" key="1">
    <source>
        <dbReference type="HAMAP-Rule" id="MF_01043"/>
    </source>
</evidence>